<evidence type="ECO:0000250" key="1"/>
<evidence type="ECO:0000250" key="2">
    <source>
        <dbReference type="UniProtKB" id="Q9QZK7"/>
    </source>
</evidence>
<evidence type="ECO:0000255" key="3">
    <source>
        <dbReference type="PROSITE-ProRule" id="PRU00389"/>
    </source>
</evidence>
<evidence type="ECO:0000256" key="4">
    <source>
        <dbReference type="SAM" id="MobiDB-lite"/>
    </source>
</evidence>
<evidence type="ECO:0000269" key="5">
    <source>
    </source>
</evidence>
<evidence type="ECO:0000303" key="6">
    <source>
    </source>
</evidence>
<evidence type="ECO:0000303" key="7">
    <source>
    </source>
</evidence>
<evidence type="ECO:0000305" key="8"/>
<evidence type="ECO:0007744" key="9">
    <source>
    </source>
</evidence>
<comment type="function">
    <text evidence="1">DOK proteins are enzymatically inert adaptor or scaffolding proteins. They provide a docking platform for the assembly of multimolecular signaling complexes. DOK3 is a negative regulator of JNK signaling in B-cells through interaction with INPP5D/SHIP1. May modulate ABL1 function (By similarity).</text>
</comment>
<comment type="subunit">
    <text evidence="1">On tyrosine phosphorylation, interacts with CSK and INPP5D/SHIP1 via their SH2 domains. Both Tyr-381 and Tyr-398 are required for interaction with INPP5D. Only Tyr-381 is required for interaction with CSK. Binds ABL1 through the PTB domain and in a kinase-dependent manner. Does not interact with RasGAP (By similarity).</text>
</comment>
<comment type="interaction">
    <interactant intactId="EBI-2834978">
        <id>Q7L591</id>
    </interactant>
    <interactant intactId="EBI-297353">
        <id>P00533</id>
        <label>EGFR</label>
    </interactant>
    <organismsDiffer>false</organismsDiffer>
    <experiments>2</experiments>
</comment>
<comment type="interaction">
    <interactant intactId="EBI-2834978">
        <id>Q7L591</id>
    </interactant>
    <interactant intactId="EBI-740322">
        <id>Q93062</id>
        <label>RBPMS</label>
    </interactant>
    <organismsDiffer>false</organismsDiffer>
    <experiments>3</experiments>
</comment>
<comment type="interaction">
    <interactant intactId="EBI-2834978">
        <id>Q7L591</id>
    </interactant>
    <interactant intactId="EBI-359224">
        <id>Q13077</id>
        <label>TRAF1</label>
    </interactant>
    <organismsDiffer>false</organismsDiffer>
    <experiments>4</experiments>
</comment>
<comment type="interaction">
    <interactant intactId="EBI-2834978">
        <id>Q7L591</id>
    </interactant>
    <interactant intactId="EBI-7061573">
        <id>Q07883</id>
        <label>GRB2</label>
    </interactant>
    <organismsDiffer>true</organismsDiffer>
    <experiments>3</experiments>
</comment>
<comment type="interaction">
    <interactant intactId="EBI-10694655">
        <id>Q7L591-3</id>
    </interactant>
    <interactant intactId="EBI-2809489">
        <id>Q9NQ94</id>
        <label>A1CF</label>
    </interactant>
    <organismsDiffer>false</organismsDiffer>
    <experiments>3</experiments>
</comment>
<comment type="interaction">
    <interactant intactId="EBI-10694655">
        <id>Q7L591-3</id>
    </interactant>
    <interactant intactId="EBI-11954519">
        <id>Q49AR9</id>
        <label>ANKS1A</label>
    </interactant>
    <organismsDiffer>false</organismsDiffer>
    <experiments>3</experiments>
</comment>
<comment type="interaction">
    <interactant intactId="EBI-10694655">
        <id>Q7L591-3</id>
    </interactant>
    <interactant intactId="EBI-1053725">
        <id>P10606</id>
        <label>COX5B</label>
    </interactant>
    <organismsDiffer>false</organismsDiffer>
    <experiments>3</experiments>
</comment>
<comment type="interaction">
    <interactant intactId="EBI-10694655">
        <id>Q7L591-3</id>
    </interactant>
    <interactant intactId="EBI-6918542">
        <id>Q8TEW6</id>
        <label>DOK4</label>
    </interactant>
    <organismsDiffer>false</organismsDiffer>
    <experiments>3</experiments>
</comment>
<comment type="interaction">
    <interactant intactId="EBI-10694655">
        <id>Q7L591-3</id>
    </interactant>
    <interactant intactId="EBI-740376">
        <id>Q86UW9</id>
        <label>DTX2</label>
    </interactant>
    <organismsDiffer>false</organismsDiffer>
    <experiments>3</experiments>
</comment>
<comment type="interaction">
    <interactant intactId="EBI-10694655">
        <id>Q7L591-3</id>
    </interactant>
    <interactant intactId="EBI-10188645">
        <id>O75603</id>
        <label>GCM2</label>
    </interactant>
    <organismsDiffer>false</organismsDiffer>
    <experiments>3</experiments>
</comment>
<comment type="interaction">
    <interactant intactId="EBI-10694655">
        <id>Q7L591-3</id>
    </interactant>
    <interactant intactId="EBI-740785">
        <id>P49639</id>
        <label>HOXA1</label>
    </interactant>
    <organismsDiffer>false</organismsDiffer>
    <experiments>3</experiments>
</comment>
<comment type="interaction">
    <interactant intactId="EBI-10694655">
        <id>Q7L591-3</id>
    </interactant>
    <interactant intactId="EBI-352682">
        <id>P04792</id>
        <label>HSPB1</label>
    </interactant>
    <organismsDiffer>false</organismsDiffer>
    <experiments>3</experiments>
</comment>
<comment type="interaction">
    <interactant intactId="EBI-10694655">
        <id>Q7L591-3</id>
    </interactant>
    <interactant intactId="EBI-10975473">
        <id>O60333-2</id>
        <label>KIF1B</label>
    </interactant>
    <organismsDiffer>false</organismsDiffer>
    <experiments>3</experiments>
</comment>
<comment type="interaction">
    <interactant intactId="EBI-10694655">
        <id>Q7L591-3</id>
    </interactant>
    <interactant intactId="EBI-724076">
        <id>Q99750</id>
        <label>MDFI</label>
    </interactant>
    <organismsDiffer>false</organismsDiffer>
    <experiments>3</experiments>
</comment>
<comment type="interaction">
    <interactant intactId="EBI-10694655">
        <id>Q7L591-3</id>
    </interactant>
    <interactant intactId="EBI-11079894">
        <id>Q9HB20</id>
        <label>PLEKHA3</label>
    </interactant>
    <organismsDiffer>false</organismsDiffer>
    <experiments>3</experiments>
</comment>
<comment type="interaction">
    <interactant intactId="EBI-10694655">
        <id>Q7L591-3</id>
    </interactant>
    <interactant intactId="EBI-1055615">
        <id>O43447</id>
        <label>PPIH</label>
    </interactant>
    <organismsDiffer>false</organismsDiffer>
    <experiments>5</experiments>
</comment>
<comment type="interaction">
    <interactant intactId="EBI-10694655">
        <id>Q7L591-3</id>
    </interactant>
    <interactant intactId="EBI-1053424">
        <id>O43741</id>
        <label>PRKAB2</label>
    </interactant>
    <organismsDiffer>false</organismsDiffer>
    <experiments>3</experiments>
</comment>
<comment type="interaction">
    <interactant intactId="EBI-10694655">
        <id>Q7L591-3</id>
    </interactant>
    <interactant intactId="EBI-396669">
        <id>Q9Y3C5</id>
        <label>RNF11</label>
    </interactant>
    <organismsDiffer>false</organismsDiffer>
    <experiments>3</experiments>
</comment>
<comment type="interaction">
    <interactant intactId="EBI-10694655">
        <id>Q7L591-3</id>
    </interactant>
    <interactant intactId="EBI-79084">
        <id>Q92529</id>
        <label>SHC3</label>
    </interactant>
    <organismsDiffer>false</organismsDiffer>
    <experiments>3</experiments>
</comment>
<comment type="interaction">
    <interactant intactId="EBI-10694655">
        <id>Q7L591-3</id>
    </interactant>
    <interactant intactId="EBI-11959123">
        <id>Q99932-2</id>
        <label>SPAG8</label>
    </interactant>
    <organismsDiffer>false</organismsDiffer>
    <experiments>3</experiments>
</comment>
<comment type="interaction">
    <interactant intactId="EBI-10694655">
        <id>Q7L591-3</id>
    </interactant>
    <interactant intactId="EBI-359224">
        <id>Q13077</id>
        <label>TRAF1</label>
    </interactant>
    <organismsDiffer>false</organismsDiffer>
    <experiments>3</experiments>
</comment>
<comment type="interaction">
    <interactant intactId="EBI-10694655">
        <id>Q7L591-3</id>
    </interactant>
    <interactant intactId="EBI-720609">
        <id>O76024</id>
        <label>WFS1</label>
    </interactant>
    <organismsDiffer>false</organismsDiffer>
    <experiments>3</experiments>
</comment>
<comment type="subcellular location">
    <subcellularLocation>
        <location evidence="1">Cytoplasm</location>
    </subcellularLocation>
    <subcellularLocation>
        <location evidence="1">Cell membrane</location>
        <topology evidence="1">Peripheral membrane protein</topology>
        <orientation evidence="1">Cytoplasmic side</orientation>
    </subcellularLocation>
</comment>
<comment type="alternative products">
    <event type="alternative splicing"/>
    <isoform>
        <id>Q7L591-1</id>
        <name>1</name>
        <sequence type="displayed"/>
    </isoform>
    <isoform>
        <id>Q7L591-2</id>
        <name>2</name>
        <sequence type="described" ref="VSP_013713 VSP_013715 VSP_013716"/>
    </isoform>
    <isoform>
        <id>Q7L591-3</id>
        <name>3</name>
        <sequence type="described" ref="VSP_013712 VSP_013715 VSP_013716"/>
    </isoform>
    <isoform>
        <id>Q7L591-4</id>
        <name>4</name>
        <sequence type="described" ref="VSP_013712 VSP_013714 VSP_013715 VSP_013716"/>
    </isoform>
</comment>
<comment type="tissue specificity">
    <text evidence="5">Expressed in spleen.</text>
</comment>
<comment type="domain">
    <text evidence="1">PTB domain mediates receptor interaction.</text>
</comment>
<comment type="PTM">
    <text evidence="1">Constitutively tyrosine-phosphorylated.</text>
</comment>
<comment type="PTM">
    <text evidence="1">On IL2 stimulation, phosphorylated on C-terminal tyrosine residues possibly by Src kinases. Can also be phosphorylated by ABL1 kinase (By similarity).</text>
</comment>
<comment type="similarity">
    <text evidence="8">Belongs to the DOK family. Type A subfamily.</text>
</comment>
<name>DOK3_HUMAN</name>
<reference key="1">
    <citation type="journal article" date="2004" name="Nat. Genet.">
        <title>Complete sequencing and characterization of 21,243 full-length human cDNAs.</title>
        <authorList>
            <person name="Ota T."/>
            <person name="Suzuki Y."/>
            <person name="Nishikawa T."/>
            <person name="Otsuki T."/>
            <person name="Sugiyama T."/>
            <person name="Irie R."/>
            <person name="Wakamatsu A."/>
            <person name="Hayashi K."/>
            <person name="Sato H."/>
            <person name="Nagai K."/>
            <person name="Kimura K."/>
            <person name="Makita H."/>
            <person name="Sekine M."/>
            <person name="Obayashi M."/>
            <person name="Nishi T."/>
            <person name="Shibahara T."/>
            <person name="Tanaka T."/>
            <person name="Ishii S."/>
            <person name="Yamamoto J."/>
            <person name="Saito K."/>
            <person name="Kawai Y."/>
            <person name="Isono Y."/>
            <person name="Nakamura Y."/>
            <person name="Nagahari K."/>
            <person name="Murakami K."/>
            <person name="Yasuda T."/>
            <person name="Iwayanagi T."/>
            <person name="Wagatsuma M."/>
            <person name="Shiratori A."/>
            <person name="Sudo H."/>
            <person name="Hosoiri T."/>
            <person name="Kaku Y."/>
            <person name="Kodaira H."/>
            <person name="Kondo H."/>
            <person name="Sugawara M."/>
            <person name="Takahashi M."/>
            <person name="Kanda K."/>
            <person name="Yokoi T."/>
            <person name="Furuya T."/>
            <person name="Kikkawa E."/>
            <person name="Omura Y."/>
            <person name="Abe K."/>
            <person name="Kamihara K."/>
            <person name="Katsuta N."/>
            <person name="Sato K."/>
            <person name="Tanikawa M."/>
            <person name="Yamazaki M."/>
            <person name="Ninomiya K."/>
            <person name="Ishibashi T."/>
            <person name="Yamashita H."/>
            <person name="Murakawa K."/>
            <person name="Fujimori K."/>
            <person name="Tanai H."/>
            <person name="Kimata M."/>
            <person name="Watanabe M."/>
            <person name="Hiraoka S."/>
            <person name="Chiba Y."/>
            <person name="Ishida S."/>
            <person name="Ono Y."/>
            <person name="Takiguchi S."/>
            <person name="Watanabe S."/>
            <person name="Yosida M."/>
            <person name="Hotuta T."/>
            <person name="Kusano J."/>
            <person name="Kanehori K."/>
            <person name="Takahashi-Fujii A."/>
            <person name="Hara H."/>
            <person name="Tanase T.-O."/>
            <person name="Nomura Y."/>
            <person name="Togiya S."/>
            <person name="Komai F."/>
            <person name="Hara R."/>
            <person name="Takeuchi K."/>
            <person name="Arita M."/>
            <person name="Imose N."/>
            <person name="Musashino K."/>
            <person name="Yuuki H."/>
            <person name="Oshima A."/>
            <person name="Sasaki N."/>
            <person name="Aotsuka S."/>
            <person name="Yoshikawa Y."/>
            <person name="Matsunawa H."/>
            <person name="Ichihara T."/>
            <person name="Shiohata N."/>
            <person name="Sano S."/>
            <person name="Moriya S."/>
            <person name="Momiyama H."/>
            <person name="Satoh N."/>
            <person name="Takami S."/>
            <person name="Terashima Y."/>
            <person name="Suzuki O."/>
            <person name="Nakagawa S."/>
            <person name="Senoh A."/>
            <person name="Mizoguchi H."/>
            <person name="Goto Y."/>
            <person name="Shimizu F."/>
            <person name="Wakebe H."/>
            <person name="Hishigaki H."/>
            <person name="Watanabe T."/>
            <person name="Sugiyama A."/>
            <person name="Takemoto M."/>
            <person name="Kawakami B."/>
            <person name="Yamazaki M."/>
            <person name="Watanabe K."/>
            <person name="Kumagai A."/>
            <person name="Itakura S."/>
            <person name="Fukuzumi Y."/>
            <person name="Fujimori Y."/>
            <person name="Komiyama M."/>
            <person name="Tashiro H."/>
            <person name="Tanigami A."/>
            <person name="Fujiwara T."/>
            <person name="Ono T."/>
            <person name="Yamada K."/>
            <person name="Fujii Y."/>
            <person name="Ozaki K."/>
            <person name="Hirao M."/>
            <person name="Ohmori Y."/>
            <person name="Kawabata A."/>
            <person name="Hikiji T."/>
            <person name="Kobatake N."/>
            <person name="Inagaki H."/>
            <person name="Ikema Y."/>
            <person name="Okamoto S."/>
            <person name="Okitani R."/>
            <person name="Kawakami T."/>
            <person name="Noguchi S."/>
            <person name="Itoh T."/>
            <person name="Shigeta K."/>
            <person name="Senba T."/>
            <person name="Matsumura K."/>
            <person name="Nakajima Y."/>
            <person name="Mizuno T."/>
            <person name="Morinaga M."/>
            <person name="Sasaki M."/>
            <person name="Togashi T."/>
            <person name="Oyama M."/>
            <person name="Hata H."/>
            <person name="Watanabe M."/>
            <person name="Komatsu T."/>
            <person name="Mizushima-Sugano J."/>
            <person name="Satoh T."/>
            <person name="Shirai Y."/>
            <person name="Takahashi Y."/>
            <person name="Nakagawa K."/>
            <person name="Okumura K."/>
            <person name="Nagase T."/>
            <person name="Nomura N."/>
            <person name="Kikuchi H."/>
            <person name="Masuho Y."/>
            <person name="Yamashita R."/>
            <person name="Nakai K."/>
            <person name="Yada T."/>
            <person name="Nakamura Y."/>
            <person name="Ohara O."/>
            <person name="Isogai T."/>
            <person name="Sugano S."/>
        </authorList>
    </citation>
    <scope>NUCLEOTIDE SEQUENCE [LARGE SCALE MRNA] (ISOFORMS 1 AND 4)</scope>
    <source>
        <tissue>Small intestine</tissue>
    </source>
</reference>
<reference key="2">
    <citation type="journal article" date="2004" name="Nature">
        <title>The DNA sequence and comparative analysis of human chromosome 5.</title>
        <authorList>
            <person name="Schmutz J."/>
            <person name="Martin J."/>
            <person name="Terry A."/>
            <person name="Couronne O."/>
            <person name="Grimwood J."/>
            <person name="Lowry S."/>
            <person name="Gordon L.A."/>
            <person name="Scott D."/>
            <person name="Xie G."/>
            <person name="Huang W."/>
            <person name="Hellsten U."/>
            <person name="Tran-Gyamfi M."/>
            <person name="She X."/>
            <person name="Prabhakar S."/>
            <person name="Aerts A."/>
            <person name="Altherr M."/>
            <person name="Bajorek E."/>
            <person name="Black S."/>
            <person name="Branscomb E."/>
            <person name="Caoile C."/>
            <person name="Challacombe J.F."/>
            <person name="Chan Y.M."/>
            <person name="Denys M."/>
            <person name="Detter J.C."/>
            <person name="Escobar J."/>
            <person name="Flowers D."/>
            <person name="Fotopulos D."/>
            <person name="Glavina T."/>
            <person name="Gomez M."/>
            <person name="Gonzales E."/>
            <person name="Goodstein D."/>
            <person name="Grigoriev I."/>
            <person name="Groza M."/>
            <person name="Hammon N."/>
            <person name="Hawkins T."/>
            <person name="Haydu L."/>
            <person name="Israni S."/>
            <person name="Jett J."/>
            <person name="Kadner K."/>
            <person name="Kimball H."/>
            <person name="Kobayashi A."/>
            <person name="Lopez F."/>
            <person name="Lou Y."/>
            <person name="Martinez D."/>
            <person name="Medina C."/>
            <person name="Morgan J."/>
            <person name="Nandkeshwar R."/>
            <person name="Noonan J.P."/>
            <person name="Pitluck S."/>
            <person name="Pollard M."/>
            <person name="Predki P."/>
            <person name="Priest J."/>
            <person name="Ramirez L."/>
            <person name="Retterer J."/>
            <person name="Rodriguez A."/>
            <person name="Rogers S."/>
            <person name="Salamov A."/>
            <person name="Salazar A."/>
            <person name="Thayer N."/>
            <person name="Tice H."/>
            <person name="Tsai M."/>
            <person name="Ustaszewska A."/>
            <person name="Vo N."/>
            <person name="Wheeler J."/>
            <person name="Wu K."/>
            <person name="Yang J."/>
            <person name="Dickson M."/>
            <person name="Cheng J.-F."/>
            <person name="Eichler E.E."/>
            <person name="Olsen A."/>
            <person name="Pennacchio L.A."/>
            <person name="Rokhsar D.S."/>
            <person name="Richardson P."/>
            <person name="Lucas S.M."/>
            <person name="Myers R.M."/>
            <person name="Rubin E.M."/>
        </authorList>
    </citation>
    <scope>NUCLEOTIDE SEQUENCE [LARGE SCALE GENOMIC DNA]</scope>
</reference>
<reference key="3">
    <citation type="journal article" date="2004" name="Genome Res.">
        <title>The status, quality, and expansion of the NIH full-length cDNA project: the Mammalian Gene Collection (MGC).</title>
        <authorList>
            <consortium name="The MGC Project Team"/>
        </authorList>
    </citation>
    <scope>NUCLEOTIDE SEQUENCE [LARGE SCALE MRNA] (ISOFORMS 2 AND 3)</scope>
    <source>
        <tissue>B-cell</tissue>
        <tissue>Lymph</tissue>
    </source>
</reference>
<reference key="4">
    <citation type="journal article" date="2003" name="Genes Immun.">
        <title>DOK4 and DOK5: new Dok-related genes expressed in human T cells.</title>
        <authorList>
            <person name="Favre C."/>
            <person name="Gerard A."/>
            <person name="Clauzier E."/>
            <person name="Pontarotti P."/>
            <person name="Olive D."/>
            <person name="Nunes J.A."/>
        </authorList>
    </citation>
    <scope>TISSUE SPECIFICITY</scope>
</reference>
<reference key="5">
    <citation type="journal article" date="2008" name="J. Proteome Res.">
        <title>Phosphoproteome of resting human platelets.</title>
        <authorList>
            <person name="Zahedi R.P."/>
            <person name="Lewandrowski U."/>
            <person name="Wiesner J."/>
            <person name="Wortelkamp S."/>
            <person name="Moebius J."/>
            <person name="Schuetz C."/>
            <person name="Walter U."/>
            <person name="Gambaryan S."/>
            <person name="Sickmann A."/>
        </authorList>
    </citation>
    <scope>IDENTIFICATION BY MASS SPECTROMETRY [LARGE SCALE ANALYSIS]</scope>
    <source>
        <tissue>Platelet</tissue>
    </source>
</reference>
<reference key="6">
    <citation type="journal article" date="2011" name="BMC Syst. Biol.">
        <title>Initial characterization of the human central proteome.</title>
        <authorList>
            <person name="Burkard T.R."/>
            <person name="Planyavsky M."/>
            <person name="Kaupe I."/>
            <person name="Breitwieser F.P."/>
            <person name="Buerckstuemmer T."/>
            <person name="Bennett K.L."/>
            <person name="Superti-Furga G."/>
            <person name="Colinge J."/>
        </authorList>
    </citation>
    <scope>IDENTIFICATION BY MASS SPECTROMETRY [LARGE SCALE ANALYSIS]</scope>
</reference>
<reference key="7">
    <citation type="journal article" date="2013" name="J. Proteome Res.">
        <title>Toward a comprehensive characterization of a human cancer cell phosphoproteome.</title>
        <authorList>
            <person name="Zhou H."/>
            <person name="Di Palma S."/>
            <person name="Preisinger C."/>
            <person name="Peng M."/>
            <person name="Polat A.N."/>
            <person name="Heck A.J."/>
            <person name="Mohammed S."/>
        </authorList>
    </citation>
    <scope>PHOSPHORYLATION [LARGE SCALE ANALYSIS] AT SER-194 AND SER-330</scope>
    <scope>IDENTIFICATION BY MASS SPECTROMETRY [LARGE SCALE ANALYSIS]</scope>
    <source>
        <tissue>Erythroleukemia</tissue>
    </source>
</reference>
<reference key="8">
    <citation type="journal article" date="2014" name="J. Proteomics">
        <title>An enzyme assisted RP-RPLC approach for in-depth analysis of human liver phosphoproteome.</title>
        <authorList>
            <person name="Bian Y."/>
            <person name="Song C."/>
            <person name="Cheng K."/>
            <person name="Dong M."/>
            <person name="Wang F."/>
            <person name="Huang J."/>
            <person name="Sun D."/>
            <person name="Wang L."/>
            <person name="Ye M."/>
            <person name="Zou H."/>
        </authorList>
    </citation>
    <scope>IDENTIFICATION BY MASS SPECTROMETRY [LARGE SCALE ANALYSIS]</scope>
    <source>
        <tissue>Liver</tissue>
    </source>
</reference>
<organism>
    <name type="scientific">Homo sapiens</name>
    <name type="common">Human</name>
    <dbReference type="NCBI Taxonomy" id="9606"/>
    <lineage>
        <taxon>Eukaryota</taxon>
        <taxon>Metazoa</taxon>
        <taxon>Chordata</taxon>
        <taxon>Craniata</taxon>
        <taxon>Vertebrata</taxon>
        <taxon>Euteleostomi</taxon>
        <taxon>Mammalia</taxon>
        <taxon>Eutheria</taxon>
        <taxon>Euarchontoglires</taxon>
        <taxon>Primates</taxon>
        <taxon>Haplorrhini</taxon>
        <taxon>Catarrhini</taxon>
        <taxon>Hominidae</taxon>
        <taxon>Homo</taxon>
    </lineage>
</organism>
<accession>Q7L591</accession>
<accession>E9PAT0</accession>
<accession>H7BXS0</accession>
<accession>Q8N864</accession>
<accession>Q9BQB3</accession>
<accession>Q9H666</accession>
<feature type="chain" id="PRO_0000187272" description="Docking protein 3">
    <location>
        <begin position="1"/>
        <end position="496"/>
    </location>
</feature>
<feature type="domain" description="PH">
    <location>
        <begin position="63"/>
        <end position="179"/>
    </location>
</feature>
<feature type="domain" description="IRS-type PTB" evidence="3">
    <location>
        <begin position="213"/>
        <end position="317"/>
    </location>
</feature>
<feature type="region of interest" description="Disordered" evidence="4">
    <location>
        <begin position="18"/>
        <end position="38"/>
    </location>
</feature>
<feature type="region of interest" description="Disordered" evidence="4">
    <location>
        <begin position="313"/>
        <end position="363"/>
    </location>
</feature>
<feature type="region of interest" description="Disordered" evidence="4">
    <location>
        <begin position="408"/>
        <end position="447"/>
    </location>
</feature>
<feature type="modified residue" description="Phosphoserine" evidence="9">
    <location>
        <position position="194"/>
    </location>
</feature>
<feature type="modified residue" description="Phosphoserine" evidence="9">
    <location>
        <position position="330"/>
    </location>
</feature>
<feature type="modified residue" description="Phosphoserine" evidence="2">
    <location>
        <position position="364"/>
    </location>
</feature>
<feature type="modified residue" description="Phosphotyrosine" evidence="2">
    <location>
        <position position="381"/>
    </location>
</feature>
<feature type="modified residue" description="Phosphoserine" evidence="2">
    <location>
        <position position="425"/>
    </location>
</feature>
<feature type="splice variant" id="VSP_013713" description="In isoform 2." evidence="7">
    <location>
        <begin position="1"/>
        <end position="170"/>
    </location>
</feature>
<feature type="splice variant" id="VSP_013712" description="In isoform 3 and isoform 4." evidence="6 7">
    <location>
        <begin position="1"/>
        <end position="56"/>
    </location>
</feature>
<feature type="splice variant" id="VSP_013714" description="In isoform 4." evidence="6">
    <location>
        <begin position="79"/>
        <end position="180"/>
    </location>
</feature>
<feature type="splice variant" id="VSP_013715" description="In isoform 2, isoform 3 and isoform 4." evidence="6 7">
    <original>GVFSFEAGRRCHSGEGLFAFSTPCAPDLCRAVAGAIARQRERLPELTRPQPCPLPRATSLPSLDTPGELREMPPGPEPPTSRKMHLAEPGPQSLPLLLGPEPNDLASGLYASVCK</original>
    <variation>ILLGTPGVSLLICKGERTDDVSGIILDESLLRAYSVPGAGGHSRVQDSLGPVLREPTFQGERSFLKTSMLRSLLCSCSWRHPRSQPRTQASCLQGSDCPAPHRNSTSAAHTLGTS</variation>
    <location>
        <begin position="272"/>
        <end position="386"/>
    </location>
</feature>
<feature type="splice variant" id="VSP_013716" description="In isoform 2, isoform 3 and isoform 4." evidence="6 7">
    <location>
        <begin position="387"/>
        <end position="496"/>
    </location>
</feature>
<feature type="sequence variant" id="VAR_057525" description="In dbSNP:rs3749728.">
    <original>R</original>
    <variation>P</variation>
    <location>
        <position position="12"/>
    </location>
</feature>
<feature type="sequence variant" id="VAR_062002" description="In dbSNP:rs41275297.">
    <original>G</original>
    <variation>R</variation>
    <location>
        <position position="22"/>
    </location>
</feature>
<feature type="sequence conflict" description="In Ref. 1; BAB15399." evidence="8" ref="1">
    <original>F</original>
    <variation>L</variation>
    <location>
        <position position="267"/>
    </location>
</feature>
<feature type="sequence conflict" description="In Ref. 2; AAH04867." evidence="8" ref="2">
    <original>R</original>
    <variation>C</variation>
    <location sequence="Q7L591-2">
        <position position="188"/>
    </location>
</feature>
<feature type="sequence conflict" description="In Ref. 3; AAH04564." evidence="8" ref="3">
    <original>R</original>
    <variation>C</variation>
    <location sequence="Q7L591-3">
        <position position="302"/>
    </location>
</feature>
<feature type="sequence conflict" description="In Ref. 1; BAC04986." evidence="8" ref="1">
    <original>R</original>
    <variation>C</variation>
    <location sequence="Q7L591-4">
        <position position="200"/>
    </location>
</feature>
<proteinExistence type="evidence at protein level"/>
<keyword id="KW-0025">Alternative splicing</keyword>
<keyword id="KW-1003">Cell membrane</keyword>
<keyword id="KW-0963">Cytoplasm</keyword>
<keyword id="KW-0472">Membrane</keyword>
<keyword id="KW-0597">Phosphoprotein</keyword>
<keyword id="KW-1267">Proteomics identification</keyword>
<keyword id="KW-1185">Reference proteome</keyword>
<protein>
    <recommendedName>
        <fullName>Docking protein 3</fullName>
    </recommendedName>
    <alternativeName>
        <fullName>Downstream of tyrosine kinase 3</fullName>
    </alternativeName>
</protein>
<dbReference type="EMBL" id="AK026223">
    <property type="protein sequence ID" value="BAB15399.1"/>
    <property type="molecule type" value="mRNA"/>
</dbReference>
<dbReference type="EMBL" id="AK097258">
    <property type="protein sequence ID" value="BAC04986.1"/>
    <property type="molecule type" value="mRNA"/>
</dbReference>
<dbReference type="EMBL" id="AC145098">
    <property type="status" value="NOT_ANNOTATED_CDS"/>
    <property type="molecule type" value="Genomic_DNA"/>
</dbReference>
<dbReference type="EMBL" id="BC004564">
    <property type="protein sequence ID" value="AAH04564.2"/>
    <property type="molecule type" value="mRNA"/>
</dbReference>
<dbReference type="EMBL" id="BC004867">
    <property type="protein sequence ID" value="AAH04867.1"/>
    <property type="molecule type" value="mRNA"/>
</dbReference>
<dbReference type="CCDS" id="CCDS47349.1">
    <molecule id="Q7L591-4"/>
</dbReference>
<dbReference type="CCDS" id="CCDS47350.1">
    <molecule id="Q7L591-3"/>
</dbReference>
<dbReference type="RefSeq" id="NP_001138347.1">
    <molecule id="Q7L591-3"/>
    <property type="nucleotide sequence ID" value="NM_001144875.2"/>
</dbReference>
<dbReference type="RefSeq" id="NP_001138348.1">
    <molecule id="Q7L591-4"/>
    <property type="nucleotide sequence ID" value="NM_001144876.2"/>
</dbReference>
<dbReference type="RefSeq" id="NP_001295164.1">
    <property type="nucleotide sequence ID" value="NM_001308235.1"/>
</dbReference>
<dbReference type="RefSeq" id="NP_001295165.1">
    <property type="nucleotide sequence ID" value="NM_001308236.1"/>
</dbReference>
<dbReference type="RefSeq" id="NP_001362727.1">
    <molecule id="Q7L591-3"/>
    <property type="nucleotide sequence ID" value="NM_001375798.1"/>
</dbReference>
<dbReference type="RefSeq" id="NP_001362728.1">
    <molecule id="Q7L591-3"/>
    <property type="nucleotide sequence ID" value="NM_001375799.2"/>
</dbReference>
<dbReference type="RefSeq" id="NP_079148.2">
    <property type="nucleotide sequence ID" value="NM_024872.2"/>
</dbReference>
<dbReference type="RefSeq" id="XP_005266044.1">
    <property type="nucleotide sequence ID" value="XM_005265987.1"/>
</dbReference>
<dbReference type="RefSeq" id="XP_047273728.1">
    <molecule id="Q7L591-3"/>
    <property type="nucleotide sequence ID" value="XM_047417772.1"/>
</dbReference>
<dbReference type="RefSeq" id="XP_047273729.1">
    <molecule id="Q7L591-3"/>
    <property type="nucleotide sequence ID" value="XM_047417773.1"/>
</dbReference>
<dbReference type="RefSeq" id="XP_047273730.1">
    <molecule id="Q7L591-3"/>
    <property type="nucleotide sequence ID" value="XM_047417774.1"/>
</dbReference>
<dbReference type="RefSeq" id="XP_047273731.1">
    <molecule id="Q7L591-4"/>
    <property type="nucleotide sequence ID" value="XM_047417775.1"/>
</dbReference>
<dbReference type="SMR" id="Q7L591"/>
<dbReference type="BioGRID" id="123005">
    <property type="interactions" value="46"/>
</dbReference>
<dbReference type="FunCoup" id="Q7L591">
    <property type="interactions" value="234"/>
</dbReference>
<dbReference type="IntAct" id="Q7L591">
    <property type="interactions" value="67"/>
</dbReference>
<dbReference type="MINT" id="Q7L591"/>
<dbReference type="STRING" id="9606.ENSP00000349727"/>
<dbReference type="GlyGen" id="Q7L591">
    <property type="glycosylation" value="1 site, 1 O-linked glycan (1 site)"/>
</dbReference>
<dbReference type="iPTMnet" id="Q7L591"/>
<dbReference type="PhosphoSitePlus" id="Q7L591"/>
<dbReference type="BioMuta" id="DOK3"/>
<dbReference type="DMDM" id="84029599"/>
<dbReference type="jPOST" id="Q7L591"/>
<dbReference type="MassIVE" id="Q7L591"/>
<dbReference type="PaxDb" id="9606-ENSP00000349727"/>
<dbReference type="PeptideAtlas" id="Q7L591"/>
<dbReference type="ProteomicsDB" id="19073"/>
<dbReference type="ProteomicsDB" id="43375"/>
<dbReference type="ProteomicsDB" id="68797">
    <molecule id="Q7L591-1"/>
</dbReference>
<dbReference type="ProteomicsDB" id="68798">
    <molecule id="Q7L591-2"/>
</dbReference>
<dbReference type="ProteomicsDB" id="68799">
    <molecule id="Q7L591-3"/>
</dbReference>
<dbReference type="ProteomicsDB" id="68800">
    <molecule id="Q7L591-4"/>
</dbReference>
<dbReference type="Pumba" id="Q7L591"/>
<dbReference type="Antibodypedia" id="29319">
    <property type="antibodies" value="384 antibodies from 36 providers"/>
</dbReference>
<dbReference type="DNASU" id="79930"/>
<dbReference type="Ensembl" id="ENST00000312943.10">
    <molecule id="Q7L591-3"/>
    <property type="protein sequence ID" value="ENSP00000325174.6"/>
    <property type="gene ID" value="ENSG00000146094.16"/>
</dbReference>
<dbReference type="Ensembl" id="ENST00000377112.8">
    <molecule id="Q7L591-4"/>
    <property type="protein sequence ID" value="ENSP00000366316.4"/>
    <property type="gene ID" value="ENSG00000146094.16"/>
</dbReference>
<dbReference type="GeneID" id="79930"/>
<dbReference type="KEGG" id="hsa:79930"/>
<dbReference type="UCSC" id="uc003mhi.5">
    <molecule id="Q7L591-1"/>
    <property type="organism name" value="human"/>
</dbReference>
<dbReference type="AGR" id="HGNC:24583"/>
<dbReference type="CTD" id="79930"/>
<dbReference type="DisGeNET" id="79930"/>
<dbReference type="GeneCards" id="DOK3"/>
<dbReference type="HGNC" id="HGNC:24583">
    <property type="gene designation" value="DOK3"/>
</dbReference>
<dbReference type="HPA" id="ENSG00000146094">
    <property type="expression patterns" value="Tissue enhanced (bone marrow, lymphoid tissue)"/>
</dbReference>
<dbReference type="MIM" id="611435">
    <property type="type" value="gene"/>
</dbReference>
<dbReference type="neXtProt" id="NX_Q7L591"/>
<dbReference type="OpenTargets" id="ENSG00000146094"/>
<dbReference type="PharmGKB" id="PA128394725"/>
<dbReference type="VEuPathDB" id="HostDB:ENSG00000146094"/>
<dbReference type="eggNOG" id="KOG4047">
    <property type="taxonomic scope" value="Eukaryota"/>
</dbReference>
<dbReference type="GeneTree" id="ENSGT00940000161724"/>
<dbReference type="HOGENOM" id="CLU_030101_0_0_1"/>
<dbReference type="InParanoid" id="Q7L591"/>
<dbReference type="OrthoDB" id="6243387at2759"/>
<dbReference type="PAN-GO" id="Q7L591">
    <property type="GO annotations" value="3 GO annotations based on evolutionary models"/>
</dbReference>
<dbReference type="PhylomeDB" id="Q7L591"/>
<dbReference type="TreeFam" id="TF324994"/>
<dbReference type="PathwayCommons" id="Q7L591"/>
<dbReference type="Reactome" id="R-HSA-6798695">
    <property type="pathway name" value="Neutrophil degranulation"/>
</dbReference>
<dbReference type="SignaLink" id="Q7L591"/>
<dbReference type="SIGNOR" id="Q7L591"/>
<dbReference type="BioGRID-ORCS" id="79930">
    <property type="hits" value="15 hits in 1153 CRISPR screens"/>
</dbReference>
<dbReference type="ChiTaRS" id="DOK3">
    <property type="organism name" value="human"/>
</dbReference>
<dbReference type="GeneWiki" id="DOK3"/>
<dbReference type="GenomeRNAi" id="79930"/>
<dbReference type="Pharos" id="Q7L591">
    <property type="development level" value="Tbio"/>
</dbReference>
<dbReference type="PRO" id="PR:Q7L591"/>
<dbReference type="Proteomes" id="UP000005640">
    <property type="component" value="Chromosome 5"/>
</dbReference>
<dbReference type="RNAct" id="Q7L591">
    <property type="molecule type" value="protein"/>
</dbReference>
<dbReference type="Bgee" id="ENSG00000146094">
    <property type="expression patterns" value="Expressed in monocyte and 124 other cell types or tissues"/>
</dbReference>
<dbReference type="ExpressionAtlas" id="Q7L591">
    <property type="expression patterns" value="baseline and differential"/>
</dbReference>
<dbReference type="GO" id="GO:0005737">
    <property type="term" value="C:cytoplasm"/>
    <property type="evidence" value="ECO:0000318"/>
    <property type="project" value="GO_Central"/>
</dbReference>
<dbReference type="GO" id="GO:0101003">
    <property type="term" value="C:ficolin-1-rich granule membrane"/>
    <property type="evidence" value="ECO:0000304"/>
    <property type="project" value="Reactome"/>
</dbReference>
<dbReference type="GO" id="GO:0005886">
    <property type="term" value="C:plasma membrane"/>
    <property type="evidence" value="ECO:0000304"/>
    <property type="project" value="Reactome"/>
</dbReference>
<dbReference type="GO" id="GO:0030667">
    <property type="term" value="C:secretory granule membrane"/>
    <property type="evidence" value="ECO:0000304"/>
    <property type="project" value="Reactome"/>
</dbReference>
<dbReference type="GO" id="GO:0007169">
    <property type="term" value="P:cell surface receptor protein tyrosine kinase signaling pathway"/>
    <property type="evidence" value="ECO:0000318"/>
    <property type="project" value="GO_Central"/>
</dbReference>
<dbReference type="GO" id="GO:0007265">
    <property type="term" value="P:Ras protein signal transduction"/>
    <property type="evidence" value="ECO:0000318"/>
    <property type="project" value="GO_Central"/>
</dbReference>
<dbReference type="CDD" id="cd14676">
    <property type="entry name" value="PH_DOK1_2_3"/>
    <property type="match status" value="1"/>
</dbReference>
<dbReference type="CDD" id="cd01203">
    <property type="entry name" value="PTB_DOK1_DOK2_DOK3"/>
    <property type="match status" value="1"/>
</dbReference>
<dbReference type="FunFam" id="2.30.29.30:FF:000213">
    <property type="entry name" value="Docking protein 3"/>
    <property type="match status" value="1"/>
</dbReference>
<dbReference type="FunFam" id="2.30.29.30:FF:000347">
    <property type="entry name" value="Docking protein 3"/>
    <property type="match status" value="1"/>
</dbReference>
<dbReference type="Gene3D" id="2.30.29.30">
    <property type="entry name" value="Pleckstrin-homology domain (PH domain)/Phosphotyrosine-binding domain (PTB)"/>
    <property type="match status" value="2"/>
</dbReference>
<dbReference type="InterPro" id="IPR050996">
    <property type="entry name" value="Docking_Protein_DOK"/>
</dbReference>
<dbReference type="InterPro" id="IPR037751">
    <property type="entry name" value="Dok1/2/3_PTB"/>
</dbReference>
<dbReference type="InterPro" id="IPR002404">
    <property type="entry name" value="IRS_PTB"/>
</dbReference>
<dbReference type="InterPro" id="IPR011993">
    <property type="entry name" value="PH-like_dom_sf"/>
</dbReference>
<dbReference type="InterPro" id="IPR001849">
    <property type="entry name" value="PH_domain"/>
</dbReference>
<dbReference type="PANTHER" id="PTHR21258:SF42">
    <property type="entry name" value="DOCKING PROTEIN 3"/>
    <property type="match status" value="1"/>
</dbReference>
<dbReference type="PANTHER" id="PTHR21258">
    <property type="entry name" value="DOCKING PROTEIN RELATED"/>
    <property type="match status" value="1"/>
</dbReference>
<dbReference type="Pfam" id="PF02174">
    <property type="entry name" value="IRS"/>
    <property type="match status" value="1"/>
</dbReference>
<dbReference type="SMART" id="SM01244">
    <property type="entry name" value="IRS"/>
    <property type="match status" value="1"/>
</dbReference>
<dbReference type="SMART" id="SM00233">
    <property type="entry name" value="PH"/>
    <property type="match status" value="1"/>
</dbReference>
<dbReference type="SMART" id="SM00310">
    <property type="entry name" value="PTBI"/>
    <property type="match status" value="1"/>
</dbReference>
<dbReference type="SUPFAM" id="SSF50729">
    <property type="entry name" value="PH domain-like"/>
    <property type="match status" value="2"/>
</dbReference>
<dbReference type="PROSITE" id="PS51064">
    <property type="entry name" value="IRS_PTB"/>
    <property type="match status" value="1"/>
</dbReference>
<sequence length="496" mass="53288">MTRGARLRSDARAQLNQLSLDGGTGSGQKGKCEEFPSSLSSVSPGLEAAALLLAVTMDPLETPIKDGILYQQHVKFGKKCWRKVWALLYAGGPSGVARLESWEVRDGGLGAAGDRSAGPGRRGERRVIRLADCVSVLPADGESCPRDTGAFLLTTTERSHLLAAQHRQAWMGPICQLAFPGTGEASSGSTDAQSPKRGLVPMEENSIYSSWQEVGEFPVVVQRTEAATRCQLKGPALLVLGPDAIQLREAKGTQALYSWPYHFLRKFGSDKGVFSFEAGRRCHSGEGLFAFSTPCAPDLCRAVAGAIARQRERLPELTRPQPCPLPRATSLPSLDTPGELREMPPGPEPPTSRKMHLAEPGPQSLPLLLGPEPNDLASGLYASVCKRASGPPGNEHLYENLCVLEASPTLHGGEPEPHEGPGSRSPTTSPIYHNGQDLSWPGPANDSTLEAQYRRLLELDQVEGTGRPDPQAGFKAKLVTLLSRERRKGPAPCDRP</sequence>
<gene>
    <name type="primary">DOK3</name>
</gene>